<name>PPR34_ARATH</name>
<protein>
    <recommendedName>
        <fullName>Pentatricopeptide repeat-containing protein At1g11710, mitochondrial</fullName>
    </recommendedName>
</protein>
<dbReference type="EMBL" id="AC007296">
    <property type="protein sequence ID" value="AAD30252.1"/>
    <property type="molecule type" value="Genomic_DNA"/>
</dbReference>
<dbReference type="EMBL" id="CP002684">
    <property type="protein sequence ID" value="AEE28773.1"/>
    <property type="molecule type" value="Genomic_DNA"/>
</dbReference>
<dbReference type="EMBL" id="AY140003">
    <property type="protein sequence ID" value="AAM98145.1"/>
    <property type="molecule type" value="mRNA"/>
</dbReference>
<dbReference type="EMBL" id="BT008412">
    <property type="protein sequence ID" value="AAP37771.1"/>
    <property type="molecule type" value="mRNA"/>
</dbReference>
<dbReference type="PIR" id="G86250">
    <property type="entry name" value="G86250"/>
</dbReference>
<dbReference type="RefSeq" id="NP_172636.1">
    <property type="nucleotide sequence ID" value="NM_101043.2"/>
</dbReference>
<dbReference type="SMR" id="Q9SAA6"/>
<dbReference type="FunCoup" id="Q9SAA6">
    <property type="interactions" value="5"/>
</dbReference>
<dbReference type="iPTMnet" id="Q9SAA6"/>
<dbReference type="PaxDb" id="3702-AT1G11710.1"/>
<dbReference type="EnsemblPlants" id="AT1G11710.1">
    <property type="protein sequence ID" value="AT1G11710.1"/>
    <property type="gene ID" value="AT1G11710"/>
</dbReference>
<dbReference type="GeneID" id="837715"/>
<dbReference type="Gramene" id="AT1G11710.1">
    <property type="protein sequence ID" value="AT1G11710.1"/>
    <property type="gene ID" value="AT1G11710"/>
</dbReference>
<dbReference type="KEGG" id="ath:AT1G11710"/>
<dbReference type="Araport" id="AT1G11710"/>
<dbReference type="TAIR" id="AT1G11710"/>
<dbReference type="eggNOG" id="KOG4197">
    <property type="taxonomic scope" value="Eukaryota"/>
</dbReference>
<dbReference type="HOGENOM" id="CLU_002706_49_12_1"/>
<dbReference type="InParanoid" id="Q9SAA6"/>
<dbReference type="OMA" id="NEIDWFW"/>
<dbReference type="PhylomeDB" id="Q9SAA6"/>
<dbReference type="PRO" id="PR:Q9SAA6"/>
<dbReference type="Proteomes" id="UP000006548">
    <property type="component" value="Chromosome 1"/>
</dbReference>
<dbReference type="ExpressionAtlas" id="Q9SAA6">
    <property type="expression patterns" value="baseline and differential"/>
</dbReference>
<dbReference type="GO" id="GO:0005739">
    <property type="term" value="C:mitochondrion"/>
    <property type="evidence" value="ECO:0007669"/>
    <property type="project" value="UniProtKB-SubCell"/>
</dbReference>
<dbReference type="Gene3D" id="1.25.40.10">
    <property type="entry name" value="Tetratricopeptide repeat domain"/>
    <property type="match status" value="5"/>
</dbReference>
<dbReference type="InterPro" id="IPR051240">
    <property type="entry name" value="Mito_RNA-Proc/Resp"/>
</dbReference>
<dbReference type="InterPro" id="IPR002885">
    <property type="entry name" value="Pentatricopeptide_rpt"/>
</dbReference>
<dbReference type="InterPro" id="IPR011990">
    <property type="entry name" value="TPR-like_helical_dom_sf"/>
</dbReference>
<dbReference type="NCBIfam" id="TIGR00756">
    <property type="entry name" value="PPR"/>
    <property type="match status" value="10"/>
</dbReference>
<dbReference type="PANTHER" id="PTHR47933:SF45">
    <property type="entry name" value="PENTACOTRIPEPTIDE-REPEAT REGION OF PRORP DOMAIN-CONTAINING PROTEIN"/>
    <property type="match status" value="1"/>
</dbReference>
<dbReference type="PANTHER" id="PTHR47933">
    <property type="entry name" value="PENTATRICOPEPTIDE REPEAT-CONTAINING PROTEIN 1, MITOCHONDRIAL"/>
    <property type="match status" value="1"/>
</dbReference>
<dbReference type="Pfam" id="PF01535">
    <property type="entry name" value="PPR"/>
    <property type="match status" value="4"/>
</dbReference>
<dbReference type="Pfam" id="PF13041">
    <property type="entry name" value="PPR_2"/>
    <property type="match status" value="4"/>
</dbReference>
<dbReference type="PROSITE" id="PS51375">
    <property type="entry name" value="PPR"/>
    <property type="match status" value="15"/>
</dbReference>
<evidence type="ECO:0000255" key="1"/>
<evidence type="ECO:0000305" key="2"/>
<keyword id="KW-0496">Mitochondrion</keyword>
<keyword id="KW-1185">Reference proteome</keyword>
<keyword id="KW-0677">Repeat</keyword>
<keyword id="KW-0809">Transit peptide</keyword>
<reference key="1">
    <citation type="journal article" date="2000" name="Nature">
        <title>Sequence and analysis of chromosome 1 of the plant Arabidopsis thaliana.</title>
        <authorList>
            <person name="Theologis A."/>
            <person name="Ecker J.R."/>
            <person name="Palm C.J."/>
            <person name="Federspiel N.A."/>
            <person name="Kaul S."/>
            <person name="White O."/>
            <person name="Alonso J."/>
            <person name="Altafi H."/>
            <person name="Araujo R."/>
            <person name="Bowman C.L."/>
            <person name="Brooks S.Y."/>
            <person name="Buehler E."/>
            <person name="Chan A."/>
            <person name="Chao Q."/>
            <person name="Chen H."/>
            <person name="Cheuk R.F."/>
            <person name="Chin C.W."/>
            <person name="Chung M.K."/>
            <person name="Conn L."/>
            <person name="Conway A.B."/>
            <person name="Conway A.R."/>
            <person name="Creasy T.H."/>
            <person name="Dewar K."/>
            <person name="Dunn P."/>
            <person name="Etgu P."/>
            <person name="Feldblyum T.V."/>
            <person name="Feng J.-D."/>
            <person name="Fong B."/>
            <person name="Fujii C.Y."/>
            <person name="Gill J.E."/>
            <person name="Goldsmith A.D."/>
            <person name="Haas B."/>
            <person name="Hansen N.F."/>
            <person name="Hughes B."/>
            <person name="Huizar L."/>
            <person name="Hunter J.L."/>
            <person name="Jenkins J."/>
            <person name="Johnson-Hopson C."/>
            <person name="Khan S."/>
            <person name="Khaykin E."/>
            <person name="Kim C.J."/>
            <person name="Koo H.L."/>
            <person name="Kremenetskaia I."/>
            <person name="Kurtz D.B."/>
            <person name="Kwan A."/>
            <person name="Lam B."/>
            <person name="Langin-Hooper S."/>
            <person name="Lee A."/>
            <person name="Lee J.M."/>
            <person name="Lenz C.A."/>
            <person name="Li J.H."/>
            <person name="Li Y.-P."/>
            <person name="Lin X."/>
            <person name="Liu S.X."/>
            <person name="Liu Z.A."/>
            <person name="Luros J.S."/>
            <person name="Maiti R."/>
            <person name="Marziali A."/>
            <person name="Militscher J."/>
            <person name="Miranda M."/>
            <person name="Nguyen M."/>
            <person name="Nierman W.C."/>
            <person name="Osborne B.I."/>
            <person name="Pai G."/>
            <person name="Peterson J."/>
            <person name="Pham P.K."/>
            <person name="Rizzo M."/>
            <person name="Rooney T."/>
            <person name="Rowley D."/>
            <person name="Sakano H."/>
            <person name="Salzberg S.L."/>
            <person name="Schwartz J.R."/>
            <person name="Shinn P."/>
            <person name="Southwick A.M."/>
            <person name="Sun H."/>
            <person name="Tallon L.J."/>
            <person name="Tambunga G."/>
            <person name="Toriumi M.J."/>
            <person name="Town C.D."/>
            <person name="Utterback T."/>
            <person name="Van Aken S."/>
            <person name="Vaysberg M."/>
            <person name="Vysotskaia V.S."/>
            <person name="Walker M."/>
            <person name="Wu D."/>
            <person name="Yu G."/>
            <person name="Fraser C.M."/>
            <person name="Venter J.C."/>
            <person name="Davis R.W."/>
        </authorList>
    </citation>
    <scope>NUCLEOTIDE SEQUENCE [LARGE SCALE GENOMIC DNA]</scope>
    <source>
        <strain>cv. Columbia</strain>
    </source>
</reference>
<reference key="2">
    <citation type="journal article" date="2017" name="Plant J.">
        <title>Araport11: a complete reannotation of the Arabidopsis thaliana reference genome.</title>
        <authorList>
            <person name="Cheng C.Y."/>
            <person name="Krishnakumar V."/>
            <person name="Chan A.P."/>
            <person name="Thibaud-Nissen F."/>
            <person name="Schobel S."/>
            <person name="Town C.D."/>
        </authorList>
    </citation>
    <scope>GENOME REANNOTATION</scope>
    <source>
        <strain>cv. Columbia</strain>
    </source>
</reference>
<reference key="3">
    <citation type="journal article" date="2003" name="Science">
        <title>Empirical analysis of transcriptional activity in the Arabidopsis genome.</title>
        <authorList>
            <person name="Yamada K."/>
            <person name="Lim J."/>
            <person name="Dale J.M."/>
            <person name="Chen H."/>
            <person name="Shinn P."/>
            <person name="Palm C.J."/>
            <person name="Southwick A.M."/>
            <person name="Wu H.C."/>
            <person name="Kim C.J."/>
            <person name="Nguyen M."/>
            <person name="Pham P.K."/>
            <person name="Cheuk R.F."/>
            <person name="Karlin-Newmann G."/>
            <person name="Liu S.X."/>
            <person name="Lam B."/>
            <person name="Sakano H."/>
            <person name="Wu T."/>
            <person name="Yu G."/>
            <person name="Miranda M."/>
            <person name="Quach H.L."/>
            <person name="Tripp M."/>
            <person name="Chang C.H."/>
            <person name="Lee J.M."/>
            <person name="Toriumi M.J."/>
            <person name="Chan M.M."/>
            <person name="Tang C.C."/>
            <person name="Onodera C.S."/>
            <person name="Deng J.M."/>
            <person name="Akiyama K."/>
            <person name="Ansari Y."/>
            <person name="Arakawa T."/>
            <person name="Banh J."/>
            <person name="Banno F."/>
            <person name="Bowser L."/>
            <person name="Brooks S.Y."/>
            <person name="Carninci P."/>
            <person name="Chao Q."/>
            <person name="Choy N."/>
            <person name="Enju A."/>
            <person name="Goldsmith A.D."/>
            <person name="Gurjal M."/>
            <person name="Hansen N.F."/>
            <person name="Hayashizaki Y."/>
            <person name="Johnson-Hopson C."/>
            <person name="Hsuan V.W."/>
            <person name="Iida K."/>
            <person name="Karnes M."/>
            <person name="Khan S."/>
            <person name="Koesema E."/>
            <person name="Ishida J."/>
            <person name="Jiang P.X."/>
            <person name="Jones T."/>
            <person name="Kawai J."/>
            <person name="Kamiya A."/>
            <person name="Meyers C."/>
            <person name="Nakajima M."/>
            <person name="Narusaka M."/>
            <person name="Seki M."/>
            <person name="Sakurai T."/>
            <person name="Satou M."/>
            <person name="Tamse R."/>
            <person name="Vaysberg M."/>
            <person name="Wallender E.K."/>
            <person name="Wong C."/>
            <person name="Yamamura Y."/>
            <person name="Yuan S."/>
            <person name="Shinozaki K."/>
            <person name="Davis R.W."/>
            <person name="Theologis A."/>
            <person name="Ecker J.R."/>
        </authorList>
    </citation>
    <scope>NUCLEOTIDE SEQUENCE [LARGE SCALE MRNA]</scope>
    <source>
        <strain>cv. Columbia</strain>
    </source>
</reference>
<reference key="4">
    <citation type="journal article" date="2004" name="Plant Cell">
        <title>Genome-wide analysis of Arabidopsis pentatricopeptide repeat proteins reveals their essential role in organelle biogenesis.</title>
        <authorList>
            <person name="Lurin C."/>
            <person name="Andres C."/>
            <person name="Aubourg S."/>
            <person name="Bellaoui M."/>
            <person name="Bitton F."/>
            <person name="Bruyere C."/>
            <person name="Caboche M."/>
            <person name="Debast C."/>
            <person name="Gualberto J."/>
            <person name="Hoffmann B."/>
            <person name="Lecharny A."/>
            <person name="Le Ret M."/>
            <person name="Martin-Magniette M.-L."/>
            <person name="Mireau H."/>
            <person name="Peeters N."/>
            <person name="Renou J.-P."/>
            <person name="Szurek B."/>
            <person name="Taconnat L."/>
            <person name="Small I."/>
        </authorList>
    </citation>
    <scope>GENE FAMILY</scope>
</reference>
<comment type="subcellular location">
    <subcellularLocation>
        <location evidence="2">Mitochondrion</location>
    </subcellularLocation>
</comment>
<comment type="similarity">
    <text evidence="2">Belongs to the PPR family. P subfamily.</text>
</comment>
<comment type="online information" name="Pentatricopeptide repeat proteins">
    <link uri="https://ppr.plantenergy.uwa.edu.au"/>
</comment>
<organism>
    <name type="scientific">Arabidopsis thaliana</name>
    <name type="common">Mouse-ear cress</name>
    <dbReference type="NCBI Taxonomy" id="3702"/>
    <lineage>
        <taxon>Eukaryota</taxon>
        <taxon>Viridiplantae</taxon>
        <taxon>Streptophyta</taxon>
        <taxon>Embryophyta</taxon>
        <taxon>Tracheophyta</taxon>
        <taxon>Spermatophyta</taxon>
        <taxon>Magnoliopsida</taxon>
        <taxon>eudicotyledons</taxon>
        <taxon>Gunneridae</taxon>
        <taxon>Pentapetalae</taxon>
        <taxon>rosids</taxon>
        <taxon>malvids</taxon>
        <taxon>Brassicales</taxon>
        <taxon>Brassicaceae</taxon>
        <taxon>Camelineae</taxon>
        <taxon>Arabidopsis</taxon>
    </lineage>
</organism>
<gene>
    <name type="ordered locus">At1g11710</name>
    <name type="ORF">F25C20.14</name>
</gene>
<sequence>MFGHVFSRRTSFLVRCFHVAKKFSNPEPEDILFSALCLNLRQRRWNTLHQFSSSLTNPLISRVLREFRSSPKLALEFYNWVLRSNTVAKSENRFEASCVMIHLLVGSRRFDDALSIMANLMSVEGEKLSPLHVLSGLIRSYQACGSSPDVFDSLVRACTQNGDAQGAYEVIEQTRAEGFCVSVHALNNFMGCLLNVNEIDRFWKVYKEMDSLGYVENVNTFNLVIYSFCKESKLFEALSVFYRMLKCGVWPNVVSFNMMIDGACKTGDMRFALQLLGKMGMMSGNFVSPNAVTYNSVINGFCKAGRLDLAERIRGDMVKSGVDCNERTYGALVDAYGRAGSSDEALRLCDEMTSKGLVVNTVIYNSIVYWLFMEGDIEGAMSVLRDMNSKNMQIDRFTQAIVVRGLCRNGYVKEAVEFQRQISEKKLVEDIVCHNTLMHHFVRDKKLACADQILGSMLVQGLSLDAISFGTLIDGYLKEGKLERALEIYDGMIKMNKTSNLVIYNSIVNGLSKRGMAGAAEAVVNAMEIKDIVTYNTLLNESLKTGNVEEADDILSKMQKQDGEKSVSLVTFNIMINHLCKFGSYEKAKEVLKFMVERGVVPDSITYGTLITSFSKHRSQEKVVELHDYLILQGVTPHEHIYLSIVRPLLDRENGRP</sequence>
<accession>Q9SAA6</accession>
<proteinExistence type="evidence at transcript level"/>
<feature type="transit peptide" description="Mitochondrion" evidence="1">
    <location>
        <begin position="1"/>
        <end position="74"/>
    </location>
</feature>
<feature type="chain" id="PRO_0000342775" description="Pentatricopeptide repeat-containing protein At1g11710, mitochondrial">
    <location>
        <begin position="75"/>
        <end position="657"/>
    </location>
</feature>
<feature type="repeat" description="PPR 1">
    <location>
        <begin position="147"/>
        <end position="181"/>
    </location>
</feature>
<feature type="repeat" description="PPR 2">
    <location>
        <begin position="182"/>
        <end position="216"/>
    </location>
</feature>
<feature type="repeat" description="PPR 3">
    <location>
        <begin position="217"/>
        <end position="251"/>
    </location>
</feature>
<feature type="repeat" description="PPR 4">
    <location>
        <begin position="252"/>
        <end position="282"/>
    </location>
</feature>
<feature type="repeat" description="PPR 5">
    <location>
        <begin position="290"/>
        <end position="324"/>
    </location>
</feature>
<feature type="repeat" description="PPR 6">
    <location>
        <begin position="325"/>
        <end position="359"/>
    </location>
</feature>
<feature type="repeat" description="PPR 7">
    <location>
        <begin position="360"/>
        <end position="394"/>
    </location>
</feature>
<feature type="repeat" description="PPR 8">
    <location>
        <begin position="395"/>
        <end position="429"/>
    </location>
</feature>
<feature type="repeat" description="PPR 9">
    <location>
        <begin position="430"/>
        <end position="464"/>
    </location>
</feature>
<feature type="repeat" description="PPR 10">
    <location>
        <begin position="465"/>
        <end position="499"/>
    </location>
</feature>
<feature type="repeat" description="PPR 11">
    <location>
        <begin position="500"/>
        <end position="530"/>
    </location>
</feature>
<feature type="repeat" description="PPR 12">
    <location>
        <begin position="531"/>
        <end position="565"/>
    </location>
</feature>
<feature type="repeat" description="PPR 13">
    <location>
        <begin position="568"/>
        <end position="602"/>
    </location>
</feature>
<feature type="repeat" description="PPR 14">
    <location>
        <begin position="603"/>
        <end position="637"/>
    </location>
</feature>